<protein>
    <recommendedName>
        <fullName>F-box protein At5g49610</fullName>
    </recommendedName>
</protein>
<reference key="1">
    <citation type="journal article" date="2000" name="DNA Res.">
        <title>Structural analysis of Arabidopsis thaliana chromosome 5. X. Sequence features of the regions of 3,076,755 bp covered by sixty P1 and TAC clones.</title>
        <authorList>
            <person name="Sato S."/>
            <person name="Nakamura Y."/>
            <person name="Kaneko T."/>
            <person name="Katoh T."/>
            <person name="Asamizu E."/>
            <person name="Kotani H."/>
            <person name="Tabata S."/>
        </authorList>
    </citation>
    <scope>NUCLEOTIDE SEQUENCE [LARGE SCALE GENOMIC DNA]</scope>
    <source>
        <strain>cv. Columbia</strain>
    </source>
</reference>
<reference key="2">
    <citation type="journal article" date="2017" name="Plant J.">
        <title>Araport11: a complete reannotation of the Arabidopsis thaliana reference genome.</title>
        <authorList>
            <person name="Cheng C.Y."/>
            <person name="Krishnakumar V."/>
            <person name="Chan A.P."/>
            <person name="Thibaud-Nissen F."/>
            <person name="Schobel S."/>
            <person name="Town C.D."/>
        </authorList>
    </citation>
    <scope>GENOME REANNOTATION</scope>
    <source>
        <strain>cv. Columbia</strain>
    </source>
</reference>
<reference key="3">
    <citation type="submission" date="2006-07" db="EMBL/GenBank/DDBJ databases">
        <title>Arabidopsis ORF clone.</title>
        <authorList>
            <person name="Quinitio C."/>
            <person name="Chen H."/>
            <person name="Kim C.J."/>
            <person name="Shinn P."/>
            <person name="Ecker J.R."/>
        </authorList>
    </citation>
    <scope>NUCLEOTIDE SEQUENCE [LARGE SCALE MRNA]</scope>
    <source>
        <strain>cv. Columbia</strain>
    </source>
</reference>
<reference key="4">
    <citation type="submission" date="2002-03" db="EMBL/GenBank/DDBJ databases">
        <title>Full-length cDNA from Arabidopsis thaliana.</title>
        <authorList>
            <person name="Brover V.V."/>
            <person name="Troukhan M.E."/>
            <person name="Alexandrov N.A."/>
            <person name="Lu Y.-P."/>
            <person name="Flavell R.B."/>
            <person name="Feldmann K.A."/>
        </authorList>
    </citation>
    <scope>NUCLEOTIDE SEQUENCE [LARGE SCALE MRNA]</scope>
</reference>
<reference key="5">
    <citation type="journal article" date="2004" name="Plant Cell Physiol.">
        <title>Expression and interaction analysis of Arabidopsis Skp1-related genes.</title>
        <authorList>
            <person name="Takahashi N."/>
            <person name="Kuroda H."/>
            <person name="Kuromori T."/>
            <person name="Hirayama T."/>
            <person name="Seki M."/>
            <person name="Shinozaki K."/>
            <person name="Shimada H."/>
            <person name="Matsui M."/>
        </authorList>
    </citation>
    <scope>INTERACTION WITH SKP1A; SKP1B; ASK11; ASK12; ASK13 AND ASK14</scope>
</reference>
<proteinExistence type="evidence at protein level"/>
<evidence type="ECO:0000250" key="1"/>
<evidence type="ECO:0000255" key="2">
    <source>
        <dbReference type="PROSITE-ProRule" id="PRU00080"/>
    </source>
</evidence>
<evidence type="ECO:0000269" key="3">
    <source>
    </source>
</evidence>
<evidence type="ECO:0000305" key="4"/>
<organism>
    <name type="scientific">Arabidopsis thaliana</name>
    <name type="common">Mouse-ear cress</name>
    <dbReference type="NCBI Taxonomy" id="3702"/>
    <lineage>
        <taxon>Eukaryota</taxon>
        <taxon>Viridiplantae</taxon>
        <taxon>Streptophyta</taxon>
        <taxon>Embryophyta</taxon>
        <taxon>Tracheophyta</taxon>
        <taxon>Spermatophyta</taxon>
        <taxon>Magnoliopsida</taxon>
        <taxon>eudicotyledons</taxon>
        <taxon>Gunneridae</taxon>
        <taxon>Pentapetalae</taxon>
        <taxon>rosids</taxon>
        <taxon>malvids</taxon>
        <taxon>Brassicales</taxon>
        <taxon>Brassicaceae</taxon>
        <taxon>Camelineae</taxon>
        <taxon>Arabidopsis</taxon>
    </lineage>
</organism>
<keyword id="KW-1185">Reference proteome</keyword>
<keyword id="KW-0833">Ubl conjugation pathway</keyword>
<feature type="chain" id="PRO_0000396057" description="F-box protein At5g49610">
    <location>
        <begin position="1"/>
        <end position="359"/>
    </location>
</feature>
<feature type="domain" description="F-box" evidence="2">
    <location>
        <begin position="3"/>
        <end position="52"/>
    </location>
</feature>
<feature type="sequence conflict" description="In Ref. 4; AAM60856." evidence="4" ref="4">
    <original>E</original>
    <variation>Q</variation>
    <location>
        <position position="62"/>
    </location>
</feature>
<feature type="sequence conflict" description="In Ref. 4; AAM60856." evidence="4" ref="4">
    <original>K</original>
    <variation>R</variation>
    <location>
        <position position="152"/>
    </location>
</feature>
<feature type="sequence conflict" description="In Ref. 4; AAM60856." evidence="4" ref="4">
    <original>R</original>
    <variation>K</variation>
    <location>
        <position position="243"/>
    </location>
</feature>
<accession>Q9FGY4</accession>
<accession>Q8LGH7</accession>
<comment type="pathway">
    <text>Protein modification; protein ubiquitination.</text>
</comment>
<comment type="subunit">
    <text evidence="1 3">Part of a SCF (SKP1-cullin-F-box) protein ligase complex (By similarity). Interacts with SKP1A, SKP1B, ASK11, ASK12, ASK13 and ASK14.</text>
</comment>
<comment type="domain">
    <text evidence="1">The F-box is necessary for the interaction with ASK proteins.</text>
</comment>
<gene>
    <name type="ordered locus">At5g49610</name>
    <name type="ORF">K6M13.17</name>
</gene>
<dbReference type="EMBL" id="AB023033">
    <property type="protein sequence ID" value="BAB10775.1"/>
    <property type="molecule type" value="Genomic_DNA"/>
</dbReference>
<dbReference type="EMBL" id="CP002688">
    <property type="protein sequence ID" value="AED95835.1"/>
    <property type="molecule type" value="Genomic_DNA"/>
</dbReference>
<dbReference type="EMBL" id="BT026025">
    <property type="protein sequence ID" value="ABG48381.1"/>
    <property type="molecule type" value="mRNA"/>
</dbReference>
<dbReference type="EMBL" id="AY084264">
    <property type="protein sequence ID" value="AAM60856.1"/>
    <property type="molecule type" value="mRNA"/>
</dbReference>
<dbReference type="RefSeq" id="NP_199772.1">
    <property type="nucleotide sequence ID" value="NM_124339.3"/>
</dbReference>
<dbReference type="SMR" id="Q9FGY4"/>
<dbReference type="BioGRID" id="20269">
    <property type="interactions" value="13"/>
</dbReference>
<dbReference type="FunCoup" id="Q9FGY4">
    <property type="interactions" value="680"/>
</dbReference>
<dbReference type="IntAct" id="Q9FGY4">
    <property type="interactions" value="7"/>
</dbReference>
<dbReference type="STRING" id="3702.Q9FGY4"/>
<dbReference type="PaxDb" id="3702-AT5G49610.1"/>
<dbReference type="ProteomicsDB" id="230798"/>
<dbReference type="EnsemblPlants" id="AT5G49610.1">
    <property type="protein sequence ID" value="AT5G49610.1"/>
    <property type="gene ID" value="AT5G49610"/>
</dbReference>
<dbReference type="GeneID" id="835023"/>
<dbReference type="Gramene" id="AT5G49610.1">
    <property type="protein sequence ID" value="AT5G49610.1"/>
    <property type="gene ID" value="AT5G49610"/>
</dbReference>
<dbReference type="KEGG" id="ath:AT5G49610"/>
<dbReference type="Araport" id="AT5G49610"/>
<dbReference type="TAIR" id="AT5G49610"/>
<dbReference type="eggNOG" id="ENOG502QW52">
    <property type="taxonomic scope" value="Eukaryota"/>
</dbReference>
<dbReference type="HOGENOM" id="CLU_027176_1_2_1"/>
<dbReference type="InParanoid" id="Q9FGY4"/>
<dbReference type="OMA" id="KIVCHRG"/>
<dbReference type="PhylomeDB" id="Q9FGY4"/>
<dbReference type="UniPathway" id="UPA00143"/>
<dbReference type="PRO" id="PR:Q9FGY4"/>
<dbReference type="Proteomes" id="UP000006548">
    <property type="component" value="Chromosome 5"/>
</dbReference>
<dbReference type="ExpressionAtlas" id="Q9FGY4">
    <property type="expression patterns" value="baseline and differential"/>
</dbReference>
<dbReference type="GO" id="GO:0016567">
    <property type="term" value="P:protein ubiquitination"/>
    <property type="evidence" value="ECO:0007669"/>
    <property type="project" value="UniProtKB-UniPathway"/>
</dbReference>
<dbReference type="CDD" id="cd22157">
    <property type="entry name" value="F-box_AtFBW1-like"/>
    <property type="match status" value="1"/>
</dbReference>
<dbReference type="Gene3D" id="1.20.1280.50">
    <property type="match status" value="1"/>
</dbReference>
<dbReference type="InterPro" id="IPR056592">
    <property type="entry name" value="At3g26010-like_b-prop"/>
</dbReference>
<dbReference type="InterPro" id="IPR017451">
    <property type="entry name" value="F-box-assoc_interact_dom"/>
</dbReference>
<dbReference type="InterPro" id="IPR036047">
    <property type="entry name" value="F-box-like_dom_sf"/>
</dbReference>
<dbReference type="InterPro" id="IPR001810">
    <property type="entry name" value="F-box_dom"/>
</dbReference>
<dbReference type="InterPro" id="IPR050796">
    <property type="entry name" value="SCF_F-box_component"/>
</dbReference>
<dbReference type="NCBIfam" id="TIGR01640">
    <property type="entry name" value="F_box_assoc_1"/>
    <property type="match status" value="1"/>
</dbReference>
<dbReference type="PANTHER" id="PTHR31672">
    <property type="entry name" value="BNACNNG10540D PROTEIN"/>
    <property type="match status" value="1"/>
</dbReference>
<dbReference type="PANTHER" id="PTHR31672:SF2">
    <property type="entry name" value="F-BOX DOMAIN-CONTAINING PROTEIN"/>
    <property type="match status" value="1"/>
</dbReference>
<dbReference type="Pfam" id="PF24750">
    <property type="entry name" value="b-prop_At3g26010-like"/>
    <property type="match status" value="1"/>
</dbReference>
<dbReference type="Pfam" id="PF00646">
    <property type="entry name" value="F-box"/>
    <property type="match status" value="1"/>
</dbReference>
<dbReference type="SMART" id="SM00256">
    <property type="entry name" value="FBOX"/>
    <property type="match status" value="1"/>
</dbReference>
<dbReference type="SUPFAM" id="SSF81383">
    <property type="entry name" value="F-box domain"/>
    <property type="match status" value="1"/>
</dbReference>
<dbReference type="PROSITE" id="PS50181">
    <property type="entry name" value="FBOX"/>
    <property type="match status" value="1"/>
</dbReference>
<name>FB341_ARATH</name>
<sequence length="359" mass="41060">MDNQKGALFPDEVILQILARLPVKSLFRFKSVCKSWYRLPSDKYFTSLFNQLSVKEQLLVAEVSDSSSLICVDNLRGVSELSLDFVRDRVRIRVSSNGLLCCSSIPEKGVYYVCNPSTREYRKLPKSRERPVTRFYPDGEATLVGLACDLSKNKFNVVLAGYHRSFGQRPDGSFICLVFDSESNKWRKFVSVLEECSFTHMSKNQVVFVNGMLHWLMSGLCYILALDVEHDVWRKISLPDEIRIGNGGGNRVYLLESDGFLSVIQLSDVWMKIWKMSEYETETWSVVDSISLRCIKGLVPGIFPICQTGEYVFLATHKQVLVYQRRSKLWKEMFSVKGSSSLPLWFSAHAFRSTIVPCN</sequence>